<proteinExistence type="inferred from homology"/>
<comment type="function">
    <text evidence="1">Methylates ribosomal protein L11.</text>
</comment>
<comment type="catalytic activity">
    <reaction evidence="1">
        <text>L-lysyl-[protein] + 3 S-adenosyl-L-methionine = N(6),N(6),N(6)-trimethyl-L-lysyl-[protein] + 3 S-adenosyl-L-homocysteine + 3 H(+)</text>
        <dbReference type="Rhea" id="RHEA:54192"/>
        <dbReference type="Rhea" id="RHEA-COMP:9752"/>
        <dbReference type="Rhea" id="RHEA-COMP:13826"/>
        <dbReference type="ChEBI" id="CHEBI:15378"/>
        <dbReference type="ChEBI" id="CHEBI:29969"/>
        <dbReference type="ChEBI" id="CHEBI:57856"/>
        <dbReference type="ChEBI" id="CHEBI:59789"/>
        <dbReference type="ChEBI" id="CHEBI:61961"/>
    </reaction>
</comment>
<comment type="subcellular location">
    <subcellularLocation>
        <location evidence="1">Cytoplasm</location>
    </subcellularLocation>
</comment>
<comment type="similarity">
    <text evidence="1">Belongs to the methyltransferase superfamily. PrmA family.</text>
</comment>
<accession>B5YDR3</accession>
<evidence type="ECO:0000255" key="1">
    <source>
        <dbReference type="HAMAP-Rule" id="MF_00735"/>
    </source>
</evidence>
<gene>
    <name evidence="1" type="primary">prmA</name>
    <name type="ordered locus">DICTH_0805</name>
</gene>
<reference key="1">
    <citation type="journal article" date="2014" name="Genome Announc.">
        <title>Complete Genome Sequence of the Extreme Thermophile Dictyoglomus thermophilum H-6-12.</title>
        <authorList>
            <person name="Coil D.A."/>
            <person name="Badger J.H."/>
            <person name="Forberger H.C."/>
            <person name="Riggs F."/>
            <person name="Madupu R."/>
            <person name="Fedorova N."/>
            <person name="Ward N."/>
            <person name="Robb F.T."/>
            <person name="Eisen J.A."/>
        </authorList>
    </citation>
    <scope>NUCLEOTIDE SEQUENCE [LARGE SCALE GENOMIC DNA]</scope>
    <source>
        <strain>ATCC 35947 / DSM 3960 / H-6-12</strain>
    </source>
</reference>
<keyword id="KW-0963">Cytoplasm</keyword>
<keyword id="KW-0489">Methyltransferase</keyword>
<keyword id="KW-0949">S-adenosyl-L-methionine</keyword>
<keyword id="KW-0808">Transferase</keyword>
<sequence>MEYFELILKTKKDLEEPIIAILEILGSKGTAIEDNFFDNSVLWDYVDEEFAERDYVLIRSYFDKDTDMEEIINRLKARIKENFEGLGDVEDVEYRVVKEEDWANEWKKYAKPIYVGRILILPSWEKVDTTEDKILVIMDPGMAFGSGSHPTTIMCIEMLQKYLKEGMDVLDVGTGSGILSIVAKKLGAGKVKGIDIDKKAVEVAKENAKRNNVELEFQQANLTIGIEDKYDIVVANLIAEIILKLNSEVKRVLKESGVYITSGIIGEKLDMVLKSFEENNIKILEIREKEGWFTVVGKNED</sequence>
<feature type="chain" id="PRO_1000192618" description="Ribosomal protein L11 methyltransferase">
    <location>
        <begin position="1"/>
        <end position="301"/>
    </location>
</feature>
<feature type="binding site" evidence="1">
    <location>
        <position position="152"/>
    </location>
    <ligand>
        <name>S-adenosyl-L-methionine</name>
        <dbReference type="ChEBI" id="CHEBI:59789"/>
    </ligand>
</feature>
<feature type="binding site" evidence="1">
    <location>
        <position position="173"/>
    </location>
    <ligand>
        <name>S-adenosyl-L-methionine</name>
        <dbReference type="ChEBI" id="CHEBI:59789"/>
    </ligand>
</feature>
<feature type="binding site" evidence="1">
    <location>
        <position position="195"/>
    </location>
    <ligand>
        <name>S-adenosyl-L-methionine</name>
        <dbReference type="ChEBI" id="CHEBI:59789"/>
    </ligand>
</feature>
<feature type="binding site" evidence="1">
    <location>
        <position position="236"/>
    </location>
    <ligand>
        <name>S-adenosyl-L-methionine</name>
        <dbReference type="ChEBI" id="CHEBI:59789"/>
    </ligand>
</feature>
<dbReference type="EC" id="2.1.1.-" evidence="1"/>
<dbReference type="EMBL" id="CP001146">
    <property type="protein sequence ID" value="ACI18967.1"/>
    <property type="molecule type" value="Genomic_DNA"/>
</dbReference>
<dbReference type="RefSeq" id="WP_012547599.1">
    <property type="nucleotide sequence ID" value="NC_011297.1"/>
</dbReference>
<dbReference type="SMR" id="B5YDR3"/>
<dbReference type="STRING" id="309799.DICTH_0805"/>
<dbReference type="PaxDb" id="309799-DICTH_0805"/>
<dbReference type="KEGG" id="dth:DICTH_0805"/>
<dbReference type="eggNOG" id="COG2264">
    <property type="taxonomic scope" value="Bacteria"/>
</dbReference>
<dbReference type="HOGENOM" id="CLU_049382_0_1_0"/>
<dbReference type="OrthoDB" id="9785995at2"/>
<dbReference type="Proteomes" id="UP000001733">
    <property type="component" value="Chromosome"/>
</dbReference>
<dbReference type="GO" id="GO:0005737">
    <property type="term" value="C:cytoplasm"/>
    <property type="evidence" value="ECO:0007669"/>
    <property type="project" value="UniProtKB-SubCell"/>
</dbReference>
<dbReference type="GO" id="GO:0016279">
    <property type="term" value="F:protein-lysine N-methyltransferase activity"/>
    <property type="evidence" value="ECO:0007669"/>
    <property type="project" value="RHEA"/>
</dbReference>
<dbReference type="GO" id="GO:0032259">
    <property type="term" value="P:methylation"/>
    <property type="evidence" value="ECO:0007669"/>
    <property type="project" value="UniProtKB-KW"/>
</dbReference>
<dbReference type="CDD" id="cd02440">
    <property type="entry name" value="AdoMet_MTases"/>
    <property type="match status" value="1"/>
</dbReference>
<dbReference type="Gene3D" id="3.40.50.150">
    <property type="entry name" value="Vaccinia Virus protein VP39"/>
    <property type="match status" value="1"/>
</dbReference>
<dbReference type="HAMAP" id="MF_00735">
    <property type="entry name" value="Methyltr_PrmA"/>
    <property type="match status" value="1"/>
</dbReference>
<dbReference type="InterPro" id="IPR050078">
    <property type="entry name" value="Ribosomal_L11_MeTrfase_PrmA"/>
</dbReference>
<dbReference type="InterPro" id="IPR004498">
    <property type="entry name" value="Ribosomal_PrmA_MeTrfase"/>
</dbReference>
<dbReference type="InterPro" id="IPR029063">
    <property type="entry name" value="SAM-dependent_MTases_sf"/>
</dbReference>
<dbReference type="NCBIfam" id="TIGR00406">
    <property type="entry name" value="prmA"/>
    <property type="match status" value="1"/>
</dbReference>
<dbReference type="PANTHER" id="PTHR43648">
    <property type="entry name" value="ELECTRON TRANSFER FLAVOPROTEIN BETA SUBUNIT LYSINE METHYLTRANSFERASE"/>
    <property type="match status" value="1"/>
</dbReference>
<dbReference type="PANTHER" id="PTHR43648:SF1">
    <property type="entry name" value="ELECTRON TRANSFER FLAVOPROTEIN BETA SUBUNIT LYSINE METHYLTRANSFERASE"/>
    <property type="match status" value="1"/>
</dbReference>
<dbReference type="Pfam" id="PF06325">
    <property type="entry name" value="PrmA"/>
    <property type="match status" value="1"/>
</dbReference>
<dbReference type="PIRSF" id="PIRSF000401">
    <property type="entry name" value="RPL11_MTase"/>
    <property type="match status" value="1"/>
</dbReference>
<dbReference type="SUPFAM" id="SSF53335">
    <property type="entry name" value="S-adenosyl-L-methionine-dependent methyltransferases"/>
    <property type="match status" value="1"/>
</dbReference>
<organism>
    <name type="scientific">Dictyoglomus thermophilum (strain ATCC 35947 / DSM 3960 / H-6-12)</name>
    <dbReference type="NCBI Taxonomy" id="309799"/>
    <lineage>
        <taxon>Bacteria</taxon>
        <taxon>Pseudomonadati</taxon>
        <taxon>Dictyoglomota</taxon>
        <taxon>Dictyoglomia</taxon>
        <taxon>Dictyoglomales</taxon>
        <taxon>Dictyoglomaceae</taxon>
        <taxon>Dictyoglomus</taxon>
    </lineage>
</organism>
<protein>
    <recommendedName>
        <fullName evidence="1">Ribosomal protein L11 methyltransferase</fullName>
        <shortName evidence="1">L11 Mtase</shortName>
        <ecNumber evidence="1">2.1.1.-</ecNumber>
    </recommendedName>
</protein>
<name>PRMA_DICT6</name>